<organism>
    <name type="scientific">Methanocaldococcus jannaschii (strain ATCC 43067 / DSM 2661 / JAL-1 / JCM 10045 / NBRC 100440)</name>
    <name type="common">Methanococcus jannaschii</name>
    <dbReference type="NCBI Taxonomy" id="243232"/>
    <lineage>
        <taxon>Archaea</taxon>
        <taxon>Methanobacteriati</taxon>
        <taxon>Methanobacteriota</taxon>
        <taxon>Methanomada group</taxon>
        <taxon>Methanococci</taxon>
        <taxon>Methanococcales</taxon>
        <taxon>Methanocaldococcaceae</taxon>
        <taxon>Methanocaldococcus</taxon>
    </lineage>
</organism>
<reference key="1">
    <citation type="journal article" date="1996" name="Science">
        <title>Complete genome sequence of the methanogenic archaeon, Methanococcus jannaschii.</title>
        <authorList>
            <person name="Bult C.J."/>
            <person name="White O."/>
            <person name="Olsen G.J."/>
            <person name="Zhou L."/>
            <person name="Fleischmann R.D."/>
            <person name="Sutton G.G."/>
            <person name="Blake J.A."/>
            <person name="FitzGerald L.M."/>
            <person name="Clayton R.A."/>
            <person name="Gocayne J.D."/>
            <person name="Kerlavage A.R."/>
            <person name="Dougherty B.A."/>
            <person name="Tomb J.-F."/>
            <person name="Adams M.D."/>
            <person name="Reich C.I."/>
            <person name="Overbeek R."/>
            <person name="Kirkness E.F."/>
            <person name="Weinstock K.G."/>
            <person name="Merrick J.M."/>
            <person name="Glodek A."/>
            <person name="Scott J.L."/>
            <person name="Geoghagen N.S.M."/>
            <person name="Weidman J.F."/>
            <person name="Fuhrmann J.L."/>
            <person name="Nguyen D."/>
            <person name="Utterback T.R."/>
            <person name="Kelley J.M."/>
            <person name="Peterson J.D."/>
            <person name="Sadow P.W."/>
            <person name="Hanna M.C."/>
            <person name="Cotton M.D."/>
            <person name="Roberts K.M."/>
            <person name="Hurst M.A."/>
            <person name="Kaine B.P."/>
            <person name="Borodovsky M."/>
            <person name="Klenk H.-P."/>
            <person name="Fraser C.M."/>
            <person name="Smith H.O."/>
            <person name="Woese C.R."/>
            <person name="Venter J.C."/>
        </authorList>
    </citation>
    <scope>NUCLEOTIDE SEQUENCE [LARGE SCALE GENOMIC DNA]</scope>
    <source>
        <strain>ATCC 43067 / DSM 2661 / JAL-1 / JCM 10045 / NBRC 100440</strain>
    </source>
</reference>
<reference key="2">
    <citation type="journal article" date="2000" name="Nucleic Acids Res.">
        <title>Archaeal RNA polymerase subunits F and P are bona fide homologs of eukaryotic RPB4 and RPB12.</title>
        <authorList>
            <person name="Werner F."/>
            <person name="Eloranta J.J."/>
            <person name="Weinzierl R.O."/>
        </authorList>
    </citation>
    <scope>INTERACTION WITH RPO4</scope>
</reference>
<reference evidence="7" key="3">
    <citation type="journal article" date="2001" name="Mol. Cell">
        <title>Structure of an archaeal homolog of the eukaryotic RNA polymerase II RPB4/RPB7 complex.</title>
        <authorList>
            <person name="Todone F."/>
            <person name="Brick P."/>
            <person name="Werner F."/>
            <person name="Weinzierl R.O."/>
            <person name="Onesti S."/>
        </authorList>
    </citation>
    <scope>X-RAY CRYSTALLOGRAPHY (1.75 ANGSTROMS)</scope>
    <scope>DOMAIN</scope>
    <scope>SUBUNIT</scope>
</reference>
<dbReference type="EC" id="2.7.7.6" evidence="1"/>
<dbReference type="EMBL" id="L77117">
    <property type="protein sequence ID" value="AAB98387.1"/>
    <property type="molecule type" value="Genomic_DNA"/>
</dbReference>
<dbReference type="PIR" id="E64349">
    <property type="entry name" value="E64349"/>
</dbReference>
<dbReference type="RefSeq" id="WP_010869896.1">
    <property type="nucleotide sequence ID" value="NC_000909.1"/>
</dbReference>
<dbReference type="PDB" id="1GO3">
    <property type="method" value="X-ray"/>
    <property type="resolution" value="1.75 A"/>
    <property type="chains" value="E/M=1-187"/>
</dbReference>
<dbReference type="PDBsum" id="1GO3"/>
<dbReference type="SMR" id="Q57840"/>
<dbReference type="FunCoup" id="Q57840">
    <property type="interactions" value="123"/>
</dbReference>
<dbReference type="IntAct" id="Q57840">
    <property type="interactions" value="1"/>
</dbReference>
<dbReference type="STRING" id="243232.MJ_0397"/>
<dbReference type="PaxDb" id="243232-MJ_0397"/>
<dbReference type="EnsemblBacteria" id="AAB98387">
    <property type="protein sequence ID" value="AAB98387"/>
    <property type="gene ID" value="MJ_0397"/>
</dbReference>
<dbReference type="GeneID" id="1451254"/>
<dbReference type="KEGG" id="mja:MJ_0397"/>
<dbReference type="eggNOG" id="arCOG00675">
    <property type="taxonomic scope" value="Archaea"/>
</dbReference>
<dbReference type="HOGENOM" id="CLU_117966_0_0_2"/>
<dbReference type="InParanoid" id="Q57840"/>
<dbReference type="OrthoDB" id="7927at2157"/>
<dbReference type="PhylomeDB" id="Q57840"/>
<dbReference type="EvolutionaryTrace" id="Q57840"/>
<dbReference type="Proteomes" id="UP000000805">
    <property type="component" value="Chromosome"/>
</dbReference>
<dbReference type="GO" id="GO:0005737">
    <property type="term" value="C:cytoplasm"/>
    <property type="evidence" value="ECO:0007669"/>
    <property type="project" value="UniProtKB-SubCell"/>
</dbReference>
<dbReference type="GO" id="GO:0000428">
    <property type="term" value="C:DNA-directed RNA polymerase complex"/>
    <property type="evidence" value="ECO:0007669"/>
    <property type="project" value="UniProtKB-KW"/>
</dbReference>
<dbReference type="GO" id="GO:0003677">
    <property type="term" value="F:DNA binding"/>
    <property type="evidence" value="ECO:0007669"/>
    <property type="project" value="InterPro"/>
</dbReference>
<dbReference type="GO" id="GO:0003899">
    <property type="term" value="F:DNA-directed RNA polymerase activity"/>
    <property type="evidence" value="ECO:0007669"/>
    <property type="project" value="UniProtKB-UniRule"/>
</dbReference>
<dbReference type="GO" id="GO:0006352">
    <property type="term" value="P:DNA-templated transcription initiation"/>
    <property type="evidence" value="ECO:0007669"/>
    <property type="project" value="InterPro"/>
</dbReference>
<dbReference type="CDD" id="cd04331">
    <property type="entry name" value="RNAP_E_N"/>
    <property type="match status" value="1"/>
</dbReference>
<dbReference type="CDD" id="cd04460">
    <property type="entry name" value="S1_RpoE"/>
    <property type="match status" value="1"/>
</dbReference>
<dbReference type="FunFam" id="3.30.1490.120:FF:000001">
    <property type="entry name" value="DNA-directed RNA polymerase II subunit RPB7"/>
    <property type="match status" value="1"/>
</dbReference>
<dbReference type="Gene3D" id="2.40.50.140">
    <property type="entry name" value="Nucleic acid-binding proteins"/>
    <property type="match status" value="1"/>
</dbReference>
<dbReference type="Gene3D" id="3.30.1490.120">
    <property type="entry name" value="RNA polymerase Rpb7-like, N-terminal domain"/>
    <property type="match status" value="1"/>
</dbReference>
<dbReference type="HAMAP" id="MF_00865">
    <property type="entry name" value="RNApol_arch_Rpo7"/>
    <property type="match status" value="1"/>
</dbReference>
<dbReference type="InterPro" id="IPR012340">
    <property type="entry name" value="NA-bd_OB-fold"/>
</dbReference>
<dbReference type="InterPro" id="IPR036898">
    <property type="entry name" value="RNA_pol_Rpb7-like_N_sf"/>
</dbReference>
<dbReference type="InterPro" id="IPR004519">
    <property type="entry name" value="RNAP_E/RPC8"/>
</dbReference>
<dbReference type="InterPro" id="IPR046399">
    <property type="entry name" value="RNApol_Rpo7"/>
</dbReference>
<dbReference type="InterPro" id="IPR045113">
    <property type="entry name" value="Rpb7-like"/>
</dbReference>
<dbReference type="InterPro" id="IPR005576">
    <property type="entry name" value="Rpb7-like_N"/>
</dbReference>
<dbReference type="InterPro" id="IPR003029">
    <property type="entry name" value="S1_domain"/>
</dbReference>
<dbReference type="NCBIfam" id="NF006333">
    <property type="entry name" value="PRK08563.1"/>
    <property type="match status" value="1"/>
</dbReference>
<dbReference type="NCBIfam" id="TIGR00448">
    <property type="entry name" value="rpoE"/>
    <property type="match status" value="1"/>
</dbReference>
<dbReference type="PANTHER" id="PTHR12709:SF4">
    <property type="entry name" value="DNA-DIRECTED RNA POLYMERASE II SUBUNIT RPB7"/>
    <property type="match status" value="1"/>
</dbReference>
<dbReference type="PANTHER" id="PTHR12709">
    <property type="entry name" value="DNA-DIRECTED RNA POLYMERASE II, III"/>
    <property type="match status" value="1"/>
</dbReference>
<dbReference type="Pfam" id="PF00575">
    <property type="entry name" value="S1"/>
    <property type="match status" value="1"/>
</dbReference>
<dbReference type="Pfam" id="PF03876">
    <property type="entry name" value="SHS2_Rpb7-N"/>
    <property type="match status" value="1"/>
</dbReference>
<dbReference type="SMART" id="SM00316">
    <property type="entry name" value="S1"/>
    <property type="match status" value="1"/>
</dbReference>
<dbReference type="SUPFAM" id="SSF88798">
    <property type="entry name" value="N-terminal, heterodimerisation domain of RBP7 (RpoE)"/>
    <property type="match status" value="1"/>
</dbReference>
<dbReference type="SUPFAM" id="SSF50249">
    <property type="entry name" value="Nucleic acid-binding proteins"/>
    <property type="match status" value="1"/>
</dbReference>
<dbReference type="PROSITE" id="PS50126">
    <property type="entry name" value="S1"/>
    <property type="match status" value="1"/>
</dbReference>
<protein>
    <recommendedName>
        <fullName evidence="1">DNA-directed RNA polymerase subunit Rpo7</fullName>
        <ecNumber evidence="1">2.7.7.6</ecNumber>
    </recommendedName>
    <alternativeName>
        <fullName evidence="1 4">DNA-directed RNA polymerase subunit E</fullName>
        <shortName evidence="3">mjE</shortName>
    </alternativeName>
    <alternativeName>
        <fullName evidence="5">DNA-directed RNA polymerase subunit E'</fullName>
    </alternativeName>
</protein>
<comment type="function">
    <text evidence="1">DNA-dependent RNA polymerase (RNAP) catalyzes the transcription of DNA into RNA using the four ribonucleoside triphosphates as substrates.</text>
</comment>
<comment type="catalytic activity">
    <reaction evidence="1">
        <text>RNA(n) + a ribonucleoside 5'-triphosphate = RNA(n+1) + diphosphate</text>
        <dbReference type="Rhea" id="RHEA:21248"/>
        <dbReference type="Rhea" id="RHEA-COMP:14527"/>
        <dbReference type="Rhea" id="RHEA-COMP:17342"/>
        <dbReference type="ChEBI" id="CHEBI:33019"/>
        <dbReference type="ChEBI" id="CHEBI:61557"/>
        <dbReference type="ChEBI" id="CHEBI:140395"/>
        <dbReference type="EC" id="2.7.7.6"/>
    </reaction>
</comment>
<comment type="subunit">
    <text evidence="1 2 6">Part of the RNA polymerase complex. Forms a stalk with Rpo4 that extends from the main structure.</text>
</comment>
<comment type="subcellular location">
    <subcellularLocation>
        <location evidence="1">Cytoplasm</location>
    </subcellularLocation>
</comment>
<comment type="domain">
    <text evidence="1 2">Forms 2 domains with an elongated structure; Rpo4 packs into the hinge region between the 2 domains.</text>
</comment>
<comment type="similarity">
    <text evidence="1">Belongs to the eukaryotic RPB7/RPC8 RNA polymerase subunit family.</text>
</comment>
<keyword id="KW-0002">3D-structure</keyword>
<keyword id="KW-0963">Cytoplasm</keyword>
<keyword id="KW-0240">DNA-directed RNA polymerase</keyword>
<keyword id="KW-0548">Nucleotidyltransferase</keyword>
<keyword id="KW-1185">Reference proteome</keyword>
<keyword id="KW-0804">Transcription</keyword>
<keyword id="KW-0808">Transferase</keyword>
<gene>
    <name evidence="1" type="primary">rpo7</name>
    <name evidence="1" type="synonym">rpoE</name>
    <name evidence="5" type="synonym">rpoE1</name>
    <name type="ordered locus">MJ0397</name>
</gene>
<name>RPO7_METJA</name>
<accession>Q57840</accession>
<proteinExistence type="evidence at protein level"/>
<feature type="chain" id="PRO_0000074036" description="DNA-directed RNA polymerase subunit Rpo7">
    <location>
        <begin position="1"/>
        <end position="187"/>
    </location>
</feature>
<feature type="domain" description="S1 motif" evidence="1">
    <location>
        <begin position="82"/>
        <end position="166"/>
    </location>
</feature>
<feature type="strand" evidence="8">
    <location>
        <begin position="2"/>
        <end position="13"/>
    </location>
</feature>
<feature type="helix" evidence="8">
    <location>
        <begin position="15"/>
        <end position="17"/>
    </location>
</feature>
<feature type="helix" evidence="8">
    <location>
        <begin position="22"/>
        <end position="34"/>
    </location>
</feature>
<feature type="turn" evidence="8">
    <location>
        <begin position="40"/>
        <end position="42"/>
    </location>
</feature>
<feature type="strand" evidence="8">
    <location>
        <begin position="43"/>
        <end position="54"/>
    </location>
</feature>
<feature type="strand" evidence="8">
    <location>
        <begin position="65"/>
        <end position="77"/>
    </location>
</feature>
<feature type="strand" evidence="8">
    <location>
        <begin position="84"/>
        <end position="93"/>
    </location>
</feature>
<feature type="strand" evidence="8">
    <location>
        <begin position="96"/>
        <end position="100"/>
    </location>
</feature>
<feature type="strand" evidence="8">
    <location>
        <begin position="102"/>
        <end position="109"/>
    </location>
</feature>
<feature type="helix" evidence="8">
    <location>
        <begin position="110"/>
        <end position="112"/>
    </location>
</feature>
<feature type="strand" evidence="8">
    <location>
        <begin position="118"/>
        <end position="120"/>
    </location>
</feature>
<feature type="strand" evidence="8">
    <location>
        <begin position="127"/>
        <end position="129"/>
    </location>
</feature>
<feature type="turn" evidence="8">
    <location>
        <begin position="130"/>
        <end position="132"/>
    </location>
</feature>
<feature type="strand" evidence="8">
    <location>
        <begin position="141"/>
        <end position="150"/>
    </location>
</feature>
<feature type="strand" evidence="8">
    <location>
        <begin position="160"/>
        <end position="164"/>
    </location>
</feature>
<feature type="helix" evidence="8">
    <location>
        <begin position="173"/>
        <end position="183"/>
    </location>
</feature>
<evidence type="ECO:0000255" key="1">
    <source>
        <dbReference type="HAMAP-Rule" id="MF_00865"/>
    </source>
</evidence>
<evidence type="ECO:0000269" key="2">
    <source>
    </source>
</evidence>
<evidence type="ECO:0000303" key="3">
    <source>
    </source>
</evidence>
<evidence type="ECO:0000303" key="4">
    <source>
    </source>
</evidence>
<evidence type="ECO:0000303" key="5">
    <source>
    </source>
</evidence>
<evidence type="ECO:0000305" key="6">
    <source>
    </source>
</evidence>
<evidence type="ECO:0007744" key="7">
    <source>
        <dbReference type="PDB" id="1GO3"/>
    </source>
</evidence>
<evidence type="ECO:0007829" key="8">
    <source>
        <dbReference type="PDB" id="1GO3"/>
    </source>
</evidence>
<sequence>MYKILEIADVVKVPPEEFGKDLKETVKKILMEKYEGRLDKDVGFVLSIVDVKDIGEGKVVHGDGSAYHPVVFETLVYIPEMYELIEGEVVDVVEFGSFVRLGPLDGLIHVSQIMDDYVSYDPKREAIIGKETGKVLEIGDYVRARIVAISLKAERKRGSKIALTMRQPYLGKLEWIEEEKAKKQNQE</sequence>